<gene>
    <name evidence="6" type="primary">mcpK</name>
    <name evidence="9" type="ordered locus">PA5072</name>
</gene>
<reference key="1">
    <citation type="journal article" date="2000" name="Nature">
        <title>Complete genome sequence of Pseudomonas aeruginosa PAO1, an opportunistic pathogen.</title>
        <authorList>
            <person name="Stover C.K."/>
            <person name="Pham X.-Q.T."/>
            <person name="Erwin A.L."/>
            <person name="Mizoguchi S.D."/>
            <person name="Warrener P."/>
            <person name="Hickey M.J."/>
            <person name="Brinkman F.S.L."/>
            <person name="Hufnagle W.O."/>
            <person name="Kowalik D.J."/>
            <person name="Lagrou M."/>
            <person name="Garber R.L."/>
            <person name="Goltry L."/>
            <person name="Tolentino E."/>
            <person name="Westbrock-Wadman S."/>
            <person name="Yuan Y."/>
            <person name="Brody L.L."/>
            <person name="Coulter S.N."/>
            <person name="Folger K.R."/>
            <person name="Kas A."/>
            <person name="Larbig K."/>
            <person name="Lim R.M."/>
            <person name="Smith K.A."/>
            <person name="Spencer D.H."/>
            <person name="Wong G.K.-S."/>
            <person name="Wu Z."/>
            <person name="Paulsen I.T."/>
            <person name="Reizer J."/>
            <person name="Saier M.H. Jr."/>
            <person name="Hancock R.E.W."/>
            <person name="Lory S."/>
            <person name="Olson M.V."/>
        </authorList>
    </citation>
    <scope>NUCLEOTIDE SEQUENCE [LARGE SCALE GENOMIC DNA]</scope>
    <source>
        <strain>ATCC 15692 / DSM 22644 / CIP 104116 / JCM 14847 / LMG 12228 / 1C / PRS 101 / PAO1</strain>
    </source>
</reference>
<reference key="2">
    <citation type="journal article" date="2016" name="Front. Microbiol.">
        <title>Identification of a chemoreceptor in Pseudomonas aeruginosa that specifically mediates chemotaxis toward alpha-ketoglutarate.</title>
        <authorList>
            <person name="Martin-Mora D."/>
            <person name="Ortega A."/>
            <person name="Reyes-Darias J.A."/>
            <person name="Garcia V."/>
            <person name="Lopez-Farfan D."/>
            <person name="Matilla M.A."/>
            <person name="Krell T."/>
        </authorList>
    </citation>
    <scope>FUNCTION</scope>
    <scope>SUBUNIT</scope>
    <scope>INDUCTION</scope>
    <scope>DISRUPTION PHENOTYPE</scope>
    <source>
        <strain>ATCC 15692 / DSM 22644 / CIP 104116 / JCM 14847 / LMG 12228 / 1C / PRS 101 / PAO1</strain>
    </source>
</reference>
<proteinExistence type="evidence at protein level"/>
<name>MCPK_PSEAE</name>
<dbReference type="EMBL" id="AE004091">
    <property type="protein sequence ID" value="AAG08457.1"/>
    <property type="molecule type" value="Genomic_DNA"/>
</dbReference>
<dbReference type="PIR" id="C83012">
    <property type="entry name" value="C83012"/>
</dbReference>
<dbReference type="RefSeq" id="NP_253759.1">
    <property type="nucleotide sequence ID" value="NC_002516.2"/>
</dbReference>
<dbReference type="RefSeq" id="WP_003115040.1">
    <property type="nucleotide sequence ID" value="NZ_QZGE01000002.1"/>
</dbReference>
<dbReference type="SMR" id="Q9HUB1"/>
<dbReference type="FunCoup" id="Q9HUB1">
    <property type="interactions" value="280"/>
</dbReference>
<dbReference type="STRING" id="208964.PA5072"/>
<dbReference type="PaxDb" id="208964-PA5072"/>
<dbReference type="GeneID" id="881232"/>
<dbReference type="KEGG" id="pae:PA5072"/>
<dbReference type="PATRIC" id="fig|208964.12.peg.5317"/>
<dbReference type="PseudoCAP" id="PA5072"/>
<dbReference type="HOGENOM" id="CLU_000445_107_27_6"/>
<dbReference type="InParanoid" id="Q9HUB1"/>
<dbReference type="OrthoDB" id="6434013at2"/>
<dbReference type="PhylomeDB" id="Q9HUB1"/>
<dbReference type="BioCyc" id="PAER208964:G1FZ6-5188-MONOMER"/>
<dbReference type="Proteomes" id="UP000002438">
    <property type="component" value="Chromosome"/>
</dbReference>
<dbReference type="GO" id="GO:0005886">
    <property type="term" value="C:plasma membrane"/>
    <property type="evidence" value="ECO:0007669"/>
    <property type="project" value="UniProtKB-SubCell"/>
</dbReference>
<dbReference type="GO" id="GO:0004888">
    <property type="term" value="F:transmembrane signaling receptor activity"/>
    <property type="evidence" value="ECO:0007669"/>
    <property type="project" value="InterPro"/>
</dbReference>
<dbReference type="GO" id="GO:0006935">
    <property type="term" value="P:chemotaxis"/>
    <property type="evidence" value="ECO:0000318"/>
    <property type="project" value="GO_Central"/>
</dbReference>
<dbReference type="GO" id="GO:0007165">
    <property type="term" value="P:signal transduction"/>
    <property type="evidence" value="ECO:0007669"/>
    <property type="project" value="UniProtKB-KW"/>
</dbReference>
<dbReference type="CDD" id="cd11386">
    <property type="entry name" value="MCP_signal"/>
    <property type="match status" value="1"/>
</dbReference>
<dbReference type="FunFam" id="1.10.287.950:FF:000001">
    <property type="entry name" value="Methyl-accepting chemotaxis sensory transducer"/>
    <property type="match status" value="1"/>
</dbReference>
<dbReference type="Gene3D" id="1.20.1440.210">
    <property type="match status" value="1"/>
</dbReference>
<dbReference type="Gene3D" id="1.10.287.950">
    <property type="entry name" value="Methyl-accepting chemotaxis protein"/>
    <property type="match status" value="1"/>
</dbReference>
<dbReference type="InterPro" id="IPR004090">
    <property type="entry name" value="Chemotax_Me-accpt_rcpt"/>
</dbReference>
<dbReference type="InterPro" id="IPR003660">
    <property type="entry name" value="HAMP_dom"/>
</dbReference>
<dbReference type="InterPro" id="IPR032255">
    <property type="entry name" value="HBM"/>
</dbReference>
<dbReference type="InterPro" id="IPR004089">
    <property type="entry name" value="MCPsignal_dom"/>
</dbReference>
<dbReference type="PANTHER" id="PTHR32089">
    <property type="entry name" value="METHYL-ACCEPTING CHEMOTAXIS PROTEIN MCPB"/>
    <property type="match status" value="1"/>
</dbReference>
<dbReference type="PANTHER" id="PTHR32089:SF120">
    <property type="entry name" value="METHYL-ACCEPTING CHEMOTAXIS PROTEIN TLPQ"/>
    <property type="match status" value="1"/>
</dbReference>
<dbReference type="Pfam" id="PF00672">
    <property type="entry name" value="HAMP"/>
    <property type="match status" value="1"/>
</dbReference>
<dbReference type="Pfam" id="PF16591">
    <property type="entry name" value="HBM"/>
    <property type="match status" value="1"/>
</dbReference>
<dbReference type="Pfam" id="PF00015">
    <property type="entry name" value="MCPsignal"/>
    <property type="match status" value="1"/>
</dbReference>
<dbReference type="PRINTS" id="PR00260">
    <property type="entry name" value="CHEMTRNSDUCR"/>
</dbReference>
<dbReference type="SMART" id="SM00304">
    <property type="entry name" value="HAMP"/>
    <property type="match status" value="2"/>
</dbReference>
<dbReference type="SMART" id="SM01358">
    <property type="entry name" value="HBM"/>
    <property type="match status" value="1"/>
</dbReference>
<dbReference type="SMART" id="SM00283">
    <property type="entry name" value="MA"/>
    <property type="match status" value="1"/>
</dbReference>
<dbReference type="SUPFAM" id="SSF58104">
    <property type="entry name" value="Methyl-accepting chemotaxis protein (MCP) signaling domain"/>
    <property type="match status" value="1"/>
</dbReference>
<dbReference type="PROSITE" id="PS50111">
    <property type="entry name" value="CHEMOTAXIS_TRANSDUC_2"/>
    <property type="match status" value="1"/>
</dbReference>
<dbReference type="PROSITE" id="PS50885">
    <property type="entry name" value="HAMP"/>
    <property type="match status" value="1"/>
</dbReference>
<dbReference type="PROSITE" id="PS51753">
    <property type="entry name" value="HBM"/>
    <property type="match status" value="1"/>
</dbReference>
<evidence type="ECO:0000255" key="1"/>
<evidence type="ECO:0000255" key="2">
    <source>
        <dbReference type="PROSITE-ProRule" id="PRU00102"/>
    </source>
</evidence>
<evidence type="ECO:0000255" key="3">
    <source>
        <dbReference type="PROSITE-ProRule" id="PRU00284"/>
    </source>
</evidence>
<evidence type="ECO:0000255" key="4">
    <source>
        <dbReference type="PROSITE-ProRule" id="PRU01089"/>
    </source>
</evidence>
<evidence type="ECO:0000269" key="5">
    <source>
    </source>
</evidence>
<evidence type="ECO:0000303" key="6">
    <source>
    </source>
</evidence>
<evidence type="ECO:0000305" key="7"/>
<evidence type="ECO:0000305" key="8">
    <source>
    </source>
</evidence>
<evidence type="ECO:0000312" key="9">
    <source>
        <dbReference type="EMBL" id="AAG08457.1"/>
    </source>
</evidence>
<keyword id="KW-0997">Cell inner membrane</keyword>
<keyword id="KW-1003">Cell membrane</keyword>
<keyword id="KW-0145">Chemotaxis</keyword>
<keyword id="KW-0472">Membrane</keyword>
<keyword id="KW-0488">Methylation</keyword>
<keyword id="KW-1185">Reference proteome</keyword>
<keyword id="KW-0807">Transducer</keyword>
<keyword id="KW-0812">Transmembrane</keyword>
<keyword id="KW-1133">Transmembrane helix</keyword>
<sequence length="647" mass="69701">MYDWWVLQLAKLSVSRKLMVGFGVLLALLLLVVISSNRTLTHQTALSEQLAEVASLMEQTQQAEQGRLAFEAGSDPRQAEQVRQTLAGMLQRLQALRDSELDPAALAHQVEAIEAYRKAFDDLAAADQQRSAARGVLVGTAQQALDSFARLEELMDASLAQQAGDPQALQRSRAVADLHQQLLMVRYQVRGYVFERSDKAEQAAFAAFDALRQAATTLRGQLPGEADAALEQAMGSLQGYRGGIEQFRAGVIRTRQAQQAMQSSTQDMARAGRTLTEAGRQLRESTASRDRASLWLIAALALAFGCVAGWAINRQIVRPLDEALAQAEAIAAGDLGKRPQNPLTLQRRDELGQLQRVMQRMGDSLRELVGRISDGVSQLASSAEELSAVTEQTRAGVNSQKVETDQVATAMHEMAATVQDVARNAELASQAARQADEEARQGDAVVDQAVTRIERLASEMDVSSEAMARLKNESEQIGSVLDVIKSVAEQTNLLALNAAIEAARAGDAGRGFAVVADEVRGLAQRTQQSTAEIEGLIQRLQQGAGEAAERLENSRSLTASTVELARRAGAALDSITRTVSDIQNMNLQIATAAEQQSTVAEEINRSVLSVRDVAEQSAAASEQTAASSGELARLGTQLQAQVGRFRL</sequence>
<organism>
    <name type="scientific">Pseudomonas aeruginosa (strain ATCC 15692 / DSM 22644 / CIP 104116 / JCM 14847 / LMG 12228 / 1C / PRS 101 / PAO1)</name>
    <dbReference type="NCBI Taxonomy" id="208964"/>
    <lineage>
        <taxon>Bacteria</taxon>
        <taxon>Pseudomonadati</taxon>
        <taxon>Pseudomonadota</taxon>
        <taxon>Gammaproteobacteria</taxon>
        <taxon>Pseudomonadales</taxon>
        <taxon>Pseudomonadaceae</taxon>
        <taxon>Pseudomonas</taxon>
    </lineage>
</organism>
<protein>
    <recommendedName>
        <fullName evidence="7">Methyl-accepting chemotaxis protein McpK</fullName>
    </recommendedName>
    <alternativeName>
        <fullName evidence="6">Methyl-accepting chemotaxis protein K</fullName>
    </alternativeName>
</protein>
<comment type="function">
    <text evidence="5">Chemotactic-signal transducers respond to changes in the concentration of attractants and repellents in the environment, transduce a signal from the outside to the inside of the cell, and facilitate sensory adaptation through the variation of the level of methylation. McpK is a chemoreceptor that specifically binds and mediates chemotaxis to alpha-ketoglutarate (alphaKG).</text>
</comment>
<comment type="subunit">
    <text evidence="5">Ligand free ligand-binding domain (LBD) is present in a monomer-dimer equilibrium. AlphaKG binding stabilizes the homodimer.</text>
</comment>
<comment type="subcellular location">
    <subcellularLocation>
        <location evidence="8">Cell inner membrane</location>
        <topology evidence="1">Multi-pass membrane protein</topology>
    </subcellularLocation>
</comment>
<comment type="induction">
    <text evidence="5">Expression of the gene is not regulated by the presence of alphaKG.</text>
</comment>
<comment type="disruption phenotype">
    <text evidence="5">Deletion of the gene results in a drop in the chemotactic response toward alphaKG to close to background levels, but does not alter maize root colonization.</text>
</comment>
<comment type="similarity">
    <text evidence="7">Belongs to the methyl-accepting chemotaxis (MCP) protein family.</text>
</comment>
<feature type="chain" id="PRO_0000454718" description="Methyl-accepting chemotaxis protein McpK">
    <location>
        <begin position="1"/>
        <end position="647"/>
    </location>
</feature>
<feature type="topological domain" description="Cytoplasmic" evidence="7">
    <location>
        <begin position="1"/>
        <end position="16"/>
    </location>
</feature>
<feature type="transmembrane region" description="Helical" evidence="1">
    <location>
        <begin position="17"/>
        <end position="37"/>
    </location>
</feature>
<feature type="topological domain" description="Periplasmic" evidence="8">
    <location>
        <begin position="38"/>
        <end position="291"/>
    </location>
</feature>
<feature type="transmembrane region" description="Helical" evidence="1">
    <location>
        <begin position="292"/>
        <end position="312"/>
    </location>
</feature>
<feature type="topological domain" description="Cytoplasmic" evidence="7">
    <location>
        <begin position="313"/>
        <end position="647"/>
    </location>
</feature>
<feature type="domain" description="HBM" evidence="4">
    <location>
        <begin position="45"/>
        <end position="287"/>
    </location>
</feature>
<feature type="domain" description="HAMP" evidence="2">
    <location>
        <begin position="314"/>
        <end position="370"/>
    </location>
</feature>
<feature type="domain" description="Methyl-accepting transducer" evidence="3">
    <location>
        <begin position="375"/>
        <end position="611"/>
    </location>
</feature>
<accession>Q9HUB1</accession>